<name>RBGA_BACP2</name>
<comment type="function">
    <text evidence="1">Essential protein that is required for a late step of 50S ribosomal subunit assembly. Has GTPase activity that is stimulated by interaction with the immature 50S ribosome subunit. Binds to the 23S rRNA. Required for the association of ribosomal proteins rplP and rpmA with the large subunit (By similarity).</text>
</comment>
<comment type="subunit">
    <text evidence="1">Interacts with ctc. Interacts with the immature 50S ribosome subunit. 2 molecules of rbgA bind to one 50S subunit (By similarity).</text>
</comment>
<comment type="subcellular location">
    <subcellularLocation>
        <location evidence="1 3">Cytoplasm</location>
    </subcellularLocation>
</comment>
<comment type="similarity">
    <text evidence="2">Belongs to the TRAFAC class YlqF/YawG GTPase family. MTG1 subfamily.</text>
</comment>
<dbReference type="EMBL" id="CP000813">
    <property type="protein sequence ID" value="ABV62186.1"/>
    <property type="molecule type" value="Genomic_DNA"/>
</dbReference>
<dbReference type="RefSeq" id="WP_012009941.1">
    <property type="nucleotide sequence ID" value="NC_009848.4"/>
</dbReference>
<dbReference type="SMR" id="A8FD69"/>
<dbReference type="STRING" id="315750.BPUM_1503"/>
<dbReference type="GeneID" id="5620766"/>
<dbReference type="KEGG" id="bpu:BPUM_1503"/>
<dbReference type="eggNOG" id="COG1161">
    <property type="taxonomic scope" value="Bacteria"/>
</dbReference>
<dbReference type="HOGENOM" id="CLU_011106_1_0_9"/>
<dbReference type="OrthoDB" id="9779790at2"/>
<dbReference type="Proteomes" id="UP000001355">
    <property type="component" value="Chromosome"/>
</dbReference>
<dbReference type="GO" id="GO:0005737">
    <property type="term" value="C:cytoplasm"/>
    <property type="evidence" value="ECO:0007669"/>
    <property type="project" value="UniProtKB-SubCell"/>
</dbReference>
<dbReference type="GO" id="GO:0005525">
    <property type="term" value="F:GTP binding"/>
    <property type="evidence" value="ECO:0007669"/>
    <property type="project" value="UniProtKB-KW"/>
</dbReference>
<dbReference type="GO" id="GO:0003924">
    <property type="term" value="F:GTPase activity"/>
    <property type="evidence" value="ECO:0007669"/>
    <property type="project" value="TreeGrafter"/>
</dbReference>
<dbReference type="GO" id="GO:0003723">
    <property type="term" value="F:RNA binding"/>
    <property type="evidence" value="ECO:0007669"/>
    <property type="project" value="UniProtKB-KW"/>
</dbReference>
<dbReference type="GO" id="GO:0042254">
    <property type="term" value="P:ribosome biogenesis"/>
    <property type="evidence" value="ECO:0007669"/>
    <property type="project" value="UniProtKB-KW"/>
</dbReference>
<dbReference type="GO" id="GO:0006412">
    <property type="term" value="P:translation"/>
    <property type="evidence" value="ECO:0007669"/>
    <property type="project" value="TreeGrafter"/>
</dbReference>
<dbReference type="CDD" id="cd00882">
    <property type="entry name" value="Ras_like_GTPase"/>
    <property type="match status" value="1"/>
</dbReference>
<dbReference type="CDD" id="cd01856">
    <property type="entry name" value="YlqF"/>
    <property type="match status" value="1"/>
</dbReference>
<dbReference type="FunFam" id="1.10.1580.10:FF:000003">
    <property type="entry name" value="Ribosome biogenesis GTPase A"/>
    <property type="match status" value="1"/>
</dbReference>
<dbReference type="FunFam" id="3.40.50.300:FF:000590">
    <property type="entry name" value="Ribosome biogenesis GTPase A"/>
    <property type="match status" value="1"/>
</dbReference>
<dbReference type="Gene3D" id="1.10.1580.10">
    <property type="match status" value="1"/>
</dbReference>
<dbReference type="Gene3D" id="3.40.50.300">
    <property type="entry name" value="P-loop containing nucleotide triphosphate hydrolases"/>
    <property type="match status" value="1"/>
</dbReference>
<dbReference type="InterPro" id="IPR030378">
    <property type="entry name" value="G_CP_dom"/>
</dbReference>
<dbReference type="InterPro" id="IPR006073">
    <property type="entry name" value="GTP-bd"/>
</dbReference>
<dbReference type="InterPro" id="IPR023179">
    <property type="entry name" value="GTP-bd_ortho_bundle_sf"/>
</dbReference>
<dbReference type="InterPro" id="IPR019991">
    <property type="entry name" value="GTP-bd_ribosome_bgen"/>
</dbReference>
<dbReference type="InterPro" id="IPR016478">
    <property type="entry name" value="GTPase_MTG1"/>
</dbReference>
<dbReference type="InterPro" id="IPR027417">
    <property type="entry name" value="P-loop_NTPase"/>
</dbReference>
<dbReference type="NCBIfam" id="TIGR03596">
    <property type="entry name" value="GTPase_YlqF"/>
    <property type="match status" value="1"/>
</dbReference>
<dbReference type="PANTHER" id="PTHR45782">
    <property type="entry name" value="MITOCHONDRIAL RIBOSOME-ASSOCIATED GTPASE 1"/>
    <property type="match status" value="1"/>
</dbReference>
<dbReference type="PANTHER" id="PTHR45782:SF4">
    <property type="entry name" value="MITOCHONDRIAL RIBOSOME-ASSOCIATED GTPASE 1"/>
    <property type="match status" value="1"/>
</dbReference>
<dbReference type="Pfam" id="PF01926">
    <property type="entry name" value="MMR_HSR1"/>
    <property type="match status" value="1"/>
</dbReference>
<dbReference type="PIRSF" id="PIRSF006230">
    <property type="entry name" value="MG442"/>
    <property type="match status" value="1"/>
</dbReference>
<dbReference type="PRINTS" id="PR00326">
    <property type="entry name" value="GTP1OBG"/>
</dbReference>
<dbReference type="SUPFAM" id="SSF52540">
    <property type="entry name" value="P-loop containing nucleoside triphosphate hydrolases"/>
    <property type="match status" value="1"/>
</dbReference>
<dbReference type="PROSITE" id="PS51721">
    <property type="entry name" value="G_CP"/>
    <property type="match status" value="1"/>
</dbReference>
<gene>
    <name evidence="1" type="primary">rbgA</name>
    <name evidence="4" type="synonym">ylqF</name>
    <name type="ordered locus">BPUM_1503</name>
</gene>
<accession>A8FD69</accession>
<proteinExistence type="inferred from homology"/>
<keyword id="KW-0963">Cytoplasm</keyword>
<keyword id="KW-0342">GTP-binding</keyword>
<keyword id="KW-0378">Hydrolase</keyword>
<keyword id="KW-0547">Nucleotide-binding</keyword>
<keyword id="KW-0690">Ribosome biogenesis</keyword>
<keyword id="KW-0694">RNA-binding</keyword>
<reference evidence="4" key="1">
    <citation type="journal article" date="2007" name="PLoS ONE">
        <title>Paradoxical DNA repair and peroxide resistance gene conservation in Bacillus pumilus SAFR-032.</title>
        <authorList>
            <person name="Gioia J."/>
            <person name="Yerrapragada S."/>
            <person name="Qin X."/>
            <person name="Jiang H."/>
            <person name="Igboeli O.C."/>
            <person name="Muzny D."/>
            <person name="Dugan-Rocha S."/>
            <person name="Ding Y."/>
            <person name="Hawes A."/>
            <person name="Liu W."/>
            <person name="Perez L."/>
            <person name="Kovar C."/>
            <person name="Dinh H."/>
            <person name="Lee S."/>
            <person name="Nazareth L."/>
            <person name="Blyth P."/>
            <person name="Holder M."/>
            <person name="Buhay C."/>
            <person name="Tirumalai M.R."/>
            <person name="Liu Y."/>
            <person name="Dasgupta I."/>
            <person name="Bokhetache L."/>
            <person name="Fujita M."/>
            <person name="Karouia F."/>
            <person name="Eswara Moorthy P."/>
            <person name="Siefert J."/>
            <person name="Uzman A."/>
            <person name="Buzumbo P."/>
            <person name="Verma A."/>
            <person name="Zwiya H."/>
            <person name="McWilliams B.D."/>
            <person name="Olowu A."/>
            <person name="Clinkenbeard K.D."/>
            <person name="Newcombe D."/>
            <person name="Golebiewski L."/>
            <person name="Petrosino J.F."/>
            <person name="Nicholson W.L."/>
            <person name="Fox G.E."/>
            <person name="Venkateswaran K."/>
            <person name="Highlander S.K."/>
            <person name="Weinstock G.M."/>
        </authorList>
    </citation>
    <scope>NUCLEOTIDE SEQUENCE [LARGE SCALE GENOMIC DNA]</scope>
    <source>
        <strain evidence="4">SAFR-032</strain>
    </source>
</reference>
<feature type="chain" id="PRO_0000409883" description="Ribosome biogenesis GTPase A">
    <location>
        <begin position="1"/>
        <end position="282"/>
    </location>
</feature>
<feature type="domain" description="CP-type G" evidence="2">
    <location>
        <begin position="14"/>
        <end position="178"/>
    </location>
</feature>
<feature type="binding site" evidence="1">
    <location>
        <begin position="58"/>
        <end position="61"/>
    </location>
    <ligand>
        <name>GTP</name>
        <dbReference type="ChEBI" id="CHEBI:37565"/>
    </ligand>
</feature>
<feature type="binding site" evidence="1">
    <location>
        <begin position="86"/>
        <end position="87"/>
    </location>
    <ligand>
        <name>GTP</name>
        <dbReference type="ChEBI" id="CHEBI:37565"/>
    </ligand>
</feature>
<feature type="binding site" evidence="1">
    <location>
        <begin position="130"/>
        <end position="135"/>
    </location>
    <ligand>
        <name>GTP</name>
        <dbReference type="ChEBI" id="CHEBI:37565"/>
    </ligand>
</feature>
<feature type="binding site" evidence="1">
    <location>
        <position position="174"/>
    </location>
    <ligand>
        <name>GTP</name>
        <dbReference type="ChEBI" id="CHEBI:37565"/>
    </ligand>
</feature>
<sequence>MTIQWFPGHMAKARREVTEKLKLIDIVFELTDARIPMSSRNPMIEEILQNKPKIMLLNKADKADPRVTKEWQAHFEQQGVRSLAINSVDGQGLNQIITTSKEILKEKFDRMKAKGVKPRAIRALIIGIPNVGKSTLINRLAKKNIAKTGDRPGITTSQQWVKVGKEMELLDTPGILWPKFEDEKVGLRLAVTGAIKDSIINLQDVAVYGLRFLEENYPERLKKRYDLTDIPEDTAELFDAIGTKRGCLMSGGFINYDKTTEIIIRDIRTEKFGPLTFEKPES</sequence>
<evidence type="ECO:0000250" key="1">
    <source>
        <dbReference type="UniProtKB" id="O31743"/>
    </source>
</evidence>
<evidence type="ECO:0000255" key="2">
    <source>
        <dbReference type="PROSITE-ProRule" id="PRU01058"/>
    </source>
</evidence>
<evidence type="ECO:0000305" key="3"/>
<evidence type="ECO:0000312" key="4">
    <source>
        <dbReference type="EMBL" id="ABV62186.1"/>
    </source>
</evidence>
<protein>
    <recommendedName>
        <fullName evidence="1">Ribosome biogenesis GTPase A</fullName>
    </recommendedName>
</protein>
<organism>
    <name type="scientific">Bacillus pumilus (strain SAFR-032)</name>
    <dbReference type="NCBI Taxonomy" id="315750"/>
    <lineage>
        <taxon>Bacteria</taxon>
        <taxon>Bacillati</taxon>
        <taxon>Bacillota</taxon>
        <taxon>Bacilli</taxon>
        <taxon>Bacillales</taxon>
        <taxon>Bacillaceae</taxon>
        <taxon>Bacillus</taxon>
    </lineage>
</organism>